<gene>
    <name evidence="1" type="primary">emtA</name>
    <name type="synonym">mltE</name>
    <name type="ordered locus">SBO_1880</name>
</gene>
<organism>
    <name type="scientific">Shigella boydii serotype 4 (strain Sb227)</name>
    <dbReference type="NCBI Taxonomy" id="300268"/>
    <lineage>
        <taxon>Bacteria</taxon>
        <taxon>Pseudomonadati</taxon>
        <taxon>Pseudomonadota</taxon>
        <taxon>Gammaproteobacteria</taxon>
        <taxon>Enterobacterales</taxon>
        <taxon>Enterobacteriaceae</taxon>
        <taxon>Shigella</taxon>
    </lineage>
</organism>
<proteinExistence type="inferred from homology"/>
<name>EMTA_SHIBS</name>
<reference key="1">
    <citation type="journal article" date="2005" name="Nucleic Acids Res.">
        <title>Genome dynamics and diversity of Shigella species, the etiologic agents of bacillary dysentery.</title>
        <authorList>
            <person name="Yang F."/>
            <person name="Yang J."/>
            <person name="Zhang X."/>
            <person name="Chen L."/>
            <person name="Jiang Y."/>
            <person name="Yan Y."/>
            <person name="Tang X."/>
            <person name="Wang J."/>
            <person name="Xiong Z."/>
            <person name="Dong J."/>
            <person name="Xue Y."/>
            <person name="Zhu Y."/>
            <person name="Xu X."/>
            <person name="Sun L."/>
            <person name="Chen S."/>
            <person name="Nie H."/>
            <person name="Peng J."/>
            <person name="Xu J."/>
            <person name="Wang Y."/>
            <person name="Yuan Z."/>
            <person name="Wen Y."/>
            <person name="Yao Z."/>
            <person name="Shen Y."/>
            <person name="Qiang B."/>
            <person name="Hou Y."/>
            <person name="Yu J."/>
            <person name="Jin Q."/>
        </authorList>
    </citation>
    <scope>NUCLEOTIDE SEQUENCE [LARGE SCALE GENOMIC DNA]</scope>
    <source>
        <strain>Sb227</strain>
    </source>
</reference>
<keyword id="KW-0998">Cell outer membrane</keyword>
<keyword id="KW-0961">Cell wall biogenesis/degradation</keyword>
<keyword id="KW-0449">Lipoprotein</keyword>
<keyword id="KW-0456">Lyase</keyword>
<keyword id="KW-0472">Membrane</keyword>
<keyword id="KW-0564">Palmitate</keyword>
<keyword id="KW-0732">Signal</keyword>
<dbReference type="EC" id="4.2.2.n2" evidence="1"/>
<dbReference type="EMBL" id="CP000036">
    <property type="protein sequence ID" value="ABB66476.1"/>
    <property type="status" value="ALT_INIT"/>
    <property type="molecule type" value="Genomic_DNA"/>
</dbReference>
<dbReference type="RefSeq" id="WP_001295616.1">
    <property type="nucleotide sequence ID" value="NC_007613.1"/>
</dbReference>
<dbReference type="SMR" id="Q31ZN3"/>
<dbReference type="CAZy" id="GH23">
    <property type="family name" value="Glycoside Hydrolase Family 23"/>
</dbReference>
<dbReference type="GeneID" id="75171299"/>
<dbReference type="KEGG" id="sbo:SBO_1880"/>
<dbReference type="HOGENOM" id="CLU_103257_0_0_6"/>
<dbReference type="Proteomes" id="UP000007067">
    <property type="component" value="Chromosome"/>
</dbReference>
<dbReference type="GO" id="GO:0009279">
    <property type="term" value="C:cell outer membrane"/>
    <property type="evidence" value="ECO:0007669"/>
    <property type="project" value="UniProtKB-SubCell"/>
</dbReference>
<dbReference type="GO" id="GO:0008932">
    <property type="term" value="F:lytic endotransglycosylase activity"/>
    <property type="evidence" value="ECO:0007669"/>
    <property type="project" value="InterPro"/>
</dbReference>
<dbReference type="GO" id="GO:0016998">
    <property type="term" value="P:cell wall macromolecule catabolic process"/>
    <property type="evidence" value="ECO:0007669"/>
    <property type="project" value="UniProtKB-UniRule"/>
</dbReference>
<dbReference type="GO" id="GO:0071555">
    <property type="term" value="P:cell wall organization"/>
    <property type="evidence" value="ECO:0007669"/>
    <property type="project" value="UniProtKB-KW"/>
</dbReference>
<dbReference type="GO" id="GO:0000270">
    <property type="term" value="P:peptidoglycan metabolic process"/>
    <property type="evidence" value="ECO:0007669"/>
    <property type="project" value="InterPro"/>
</dbReference>
<dbReference type="CDD" id="cd16893">
    <property type="entry name" value="LT_MltC_MltE"/>
    <property type="match status" value="1"/>
</dbReference>
<dbReference type="FunFam" id="1.10.530.10:FF:000007">
    <property type="entry name" value="Endo-type membrane-bound lytic murein transglycosylase A"/>
    <property type="match status" value="1"/>
</dbReference>
<dbReference type="Gene3D" id="1.10.530.10">
    <property type="match status" value="1"/>
</dbReference>
<dbReference type="HAMAP" id="MF_01381">
    <property type="entry name" value="EmtA"/>
    <property type="match status" value="1"/>
</dbReference>
<dbReference type="InterPro" id="IPR023946">
    <property type="entry name" value="EmtA"/>
</dbReference>
<dbReference type="InterPro" id="IPR023346">
    <property type="entry name" value="Lysozyme-like_dom_sf"/>
</dbReference>
<dbReference type="InterPro" id="IPR000189">
    <property type="entry name" value="Transglyc_AS"/>
</dbReference>
<dbReference type="InterPro" id="IPR008258">
    <property type="entry name" value="Transglycosylase_SLT_dom_1"/>
</dbReference>
<dbReference type="NCBIfam" id="NF012014">
    <property type="entry name" value="PRK15470.1"/>
    <property type="match status" value="1"/>
</dbReference>
<dbReference type="PANTHER" id="PTHR37423:SF4">
    <property type="entry name" value="ENDO-TYPE MEMBRANE-BOUND LYTIC MUREIN TRANSGLYCOSYLASE A"/>
    <property type="match status" value="1"/>
</dbReference>
<dbReference type="PANTHER" id="PTHR37423">
    <property type="entry name" value="SOLUBLE LYTIC MUREIN TRANSGLYCOSYLASE-RELATED"/>
    <property type="match status" value="1"/>
</dbReference>
<dbReference type="Pfam" id="PF01464">
    <property type="entry name" value="SLT"/>
    <property type="match status" value="1"/>
</dbReference>
<dbReference type="SUPFAM" id="SSF53955">
    <property type="entry name" value="Lysozyme-like"/>
    <property type="match status" value="1"/>
</dbReference>
<dbReference type="PROSITE" id="PS51257">
    <property type="entry name" value="PROKAR_LIPOPROTEIN"/>
    <property type="match status" value="1"/>
</dbReference>
<dbReference type="PROSITE" id="PS00922">
    <property type="entry name" value="TRANSGLYCOSYLASE"/>
    <property type="match status" value="1"/>
</dbReference>
<evidence type="ECO:0000255" key="1">
    <source>
        <dbReference type="HAMAP-Rule" id="MF_01381"/>
    </source>
</evidence>
<evidence type="ECO:0000305" key="2"/>
<sequence length="203" mass="22213">MKLRWFAFLIVLLAGCSSKHDYTNPPWNAKVPVQRAMQWMPISQKAGAAWGVDPQLITAIIAIESGGNPNAVSKSNAIGLMQLKASTSGRDVYRRMGWSGEPTTSELKNPERNISMGAAYLNILETGPLAGIEDPKVLQYALVVSYANGAGALLRTFSSDRKKAISKINDLDADEFLDHVARNHPAPQAPRYIYKLEQALDAM</sequence>
<accession>Q31ZN3</accession>
<feature type="signal peptide" evidence="1">
    <location>
        <begin position="1"/>
        <end position="15"/>
    </location>
</feature>
<feature type="chain" id="PRO_0000312914" description="Endo-type membrane-bound lytic murein transglycosylase A">
    <location>
        <begin position="16"/>
        <end position="203"/>
    </location>
</feature>
<feature type="lipid moiety-binding region" description="N-palmitoyl cysteine" evidence="1">
    <location>
        <position position="16"/>
    </location>
</feature>
<feature type="lipid moiety-binding region" description="S-diacylglycerol cysteine" evidence="1">
    <location>
        <position position="16"/>
    </location>
</feature>
<protein>
    <recommendedName>
        <fullName evidence="1">Endo-type membrane-bound lytic murein transglycosylase A</fullName>
        <ecNumber evidence="1">4.2.2.n2</ecNumber>
    </recommendedName>
    <alternativeName>
        <fullName evidence="1">Peptidoglycan lytic endotransglycosylase</fullName>
    </alternativeName>
</protein>
<comment type="function">
    <text evidence="1">Murein-degrading enzyme. May play a role in recycling of muropeptides during cell elongation and/or cell division. Preferentially cleaves at a distance of more than two disaccharide units from the ends of the glycan chain.</text>
</comment>
<comment type="catalytic activity">
    <reaction evidence="1">
        <text>Endolytic cleavage of the (1-&gt;4)-beta-glycosidic linkage between N-acetylmuramic acid (MurNAc) and N-acetylglucosamine (GlcNAc) residues in peptidoglycan with concomitant formation of a 1,6-anhydrobond in the MurNAc residue.</text>
        <dbReference type="EC" id="4.2.2.n2"/>
    </reaction>
</comment>
<comment type="subcellular location">
    <subcellularLocation>
        <location evidence="1">Cell outer membrane</location>
        <topology evidence="1">Lipid-anchor</topology>
    </subcellularLocation>
</comment>
<comment type="similarity">
    <text evidence="1">Belongs to the transglycosylase Slt family.</text>
</comment>
<comment type="sequence caution" evidence="2">
    <conflict type="erroneous initiation">
        <sequence resource="EMBL-CDS" id="ABB66476"/>
    </conflict>
</comment>